<feature type="chain" id="PRO_0000330972" description="Glutamate--tRNA ligase">
    <location>
        <begin position="1"/>
        <end position="505"/>
    </location>
</feature>
<feature type="short sequence motif" description="'HIGH' region" evidence="1">
    <location>
        <begin position="11"/>
        <end position="21"/>
    </location>
</feature>
<feature type="short sequence motif" description="'KMSKS' region" evidence="1">
    <location>
        <begin position="260"/>
        <end position="264"/>
    </location>
</feature>
<feature type="binding site" evidence="1">
    <location>
        <position position="263"/>
    </location>
    <ligand>
        <name>ATP</name>
        <dbReference type="ChEBI" id="CHEBI:30616"/>
    </ligand>
</feature>
<keyword id="KW-0030">Aminoacyl-tRNA synthetase</keyword>
<keyword id="KW-0067">ATP-binding</keyword>
<keyword id="KW-0963">Cytoplasm</keyword>
<keyword id="KW-0436">Ligase</keyword>
<keyword id="KW-0547">Nucleotide-binding</keyword>
<keyword id="KW-0648">Protein biosynthesis</keyword>
<sequence length="505" mass="58397">MSSKVRVRFAPSPTGPLHIGGVRTALYNYLFAKKHGGDFVLRIEDTDQNRYVEGAEDYIIEALNWCGIPYDEGPGKEKGFGPYRQSERKDQYREYAEKLIKSGNAYYAFDTSDELDGHRKDHEEKGKTFIYNWHNRQKLKNSLSLSQEEVQEKLDGEEDYVIRFKSPQDETLHLKDVIRGDMEIDTNILDDKVLFKSDGMPTYHLANIVDDHLMEITHVIRGEEWLPSLALHYMLYRAFGWNAPQFAHLPLILKPQGKGKLSKRDGEKMGFPVFPLEWKDPESGDISAGYKEEGYFPEAVVNMLAFLGWNPGTEEEFFGLEDLTKAFELERVHKGGAKFDPEKTKWFQQHYIQLADNEFLADEFEKRLEKKEIEADKIYISEVVALIKERVVFVEDFWDQGYFFFIAPTSFDPKDSKKAWKEGTSELMTELNEYLKSIDNFEAEHLQETVKGWIKSKEIGFGKVMMPLRIALVGALQGPDLYKIAEFIGKEATLKRIQKAVDTLK</sequence>
<dbReference type="EC" id="6.1.1.17" evidence="1"/>
<dbReference type="EMBL" id="CU207366">
    <property type="protein sequence ID" value="CAL68245.1"/>
    <property type="molecule type" value="Genomic_DNA"/>
</dbReference>
<dbReference type="RefSeq" id="WP_011711146.1">
    <property type="nucleotide sequence ID" value="NC_008571.1"/>
</dbReference>
<dbReference type="SMR" id="A0M6K0"/>
<dbReference type="STRING" id="411154.GFO_3302"/>
<dbReference type="KEGG" id="gfo:GFO_3302"/>
<dbReference type="eggNOG" id="COG0008">
    <property type="taxonomic scope" value="Bacteria"/>
</dbReference>
<dbReference type="HOGENOM" id="CLU_015768_6_3_10"/>
<dbReference type="OrthoDB" id="9807503at2"/>
<dbReference type="Proteomes" id="UP000000755">
    <property type="component" value="Chromosome"/>
</dbReference>
<dbReference type="GO" id="GO:0005829">
    <property type="term" value="C:cytosol"/>
    <property type="evidence" value="ECO:0007669"/>
    <property type="project" value="TreeGrafter"/>
</dbReference>
<dbReference type="GO" id="GO:0005524">
    <property type="term" value="F:ATP binding"/>
    <property type="evidence" value="ECO:0007669"/>
    <property type="project" value="UniProtKB-UniRule"/>
</dbReference>
<dbReference type="GO" id="GO:0004818">
    <property type="term" value="F:glutamate-tRNA ligase activity"/>
    <property type="evidence" value="ECO:0007669"/>
    <property type="project" value="UniProtKB-UniRule"/>
</dbReference>
<dbReference type="GO" id="GO:0000049">
    <property type="term" value="F:tRNA binding"/>
    <property type="evidence" value="ECO:0007669"/>
    <property type="project" value="InterPro"/>
</dbReference>
<dbReference type="GO" id="GO:0008270">
    <property type="term" value="F:zinc ion binding"/>
    <property type="evidence" value="ECO:0007669"/>
    <property type="project" value="InterPro"/>
</dbReference>
<dbReference type="GO" id="GO:0006424">
    <property type="term" value="P:glutamyl-tRNA aminoacylation"/>
    <property type="evidence" value="ECO:0007669"/>
    <property type="project" value="UniProtKB-UniRule"/>
</dbReference>
<dbReference type="CDD" id="cd00808">
    <property type="entry name" value="GluRS_core"/>
    <property type="match status" value="1"/>
</dbReference>
<dbReference type="FunFam" id="3.40.50.620:FF:000127">
    <property type="entry name" value="Glutamate--tRNA ligase"/>
    <property type="match status" value="1"/>
</dbReference>
<dbReference type="Gene3D" id="1.10.10.350">
    <property type="match status" value="1"/>
</dbReference>
<dbReference type="Gene3D" id="1.10.1160.10">
    <property type="entry name" value="Glutamyl-trna Synthetase, Domain 2"/>
    <property type="match status" value="1"/>
</dbReference>
<dbReference type="Gene3D" id="3.90.800.10">
    <property type="entry name" value="Glutamyl-tRNA Synthetase, Domain 3"/>
    <property type="match status" value="1"/>
</dbReference>
<dbReference type="Gene3D" id="3.40.50.620">
    <property type="entry name" value="HUPs"/>
    <property type="match status" value="1"/>
</dbReference>
<dbReference type="HAMAP" id="MF_00022">
    <property type="entry name" value="Glu_tRNA_synth_type1"/>
    <property type="match status" value="1"/>
</dbReference>
<dbReference type="InterPro" id="IPR045462">
    <property type="entry name" value="aa-tRNA-synth_I_cd-bd"/>
</dbReference>
<dbReference type="InterPro" id="IPR020751">
    <property type="entry name" value="aa-tRNA-synth_I_codon-bd_sub2"/>
</dbReference>
<dbReference type="InterPro" id="IPR001412">
    <property type="entry name" value="aa-tRNA-synth_I_CS"/>
</dbReference>
<dbReference type="InterPro" id="IPR008925">
    <property type="entry name" value="aa_tRNA-synth_I_cd-bd_sf"/>
</dbReference>
<dbReference type="InterPro" id="IPR004527">
    <property type="entry name" value="Glu-tRNA-ligase_bac/mito"/>
</dbReference>
<dbReference type="InterPro" id="IPR000924">
    <property type="entry name" value="Glu/Gln-tRNA-synth"/>
</dbReference>
<dbReference type="InterPro" id="IPR020058">
    <property type="entry name" value="Glu/Gln-tRNA-synth_Ib_cat-dom"/>
</dbReference>
<dbReference type="InterPro" id="IPR020061">
    <property type="entry name" value="Glu_tRNA_lig_a-bdl"/>
</dbReference>
<dbReference type="InterPro" id="IPR049940">
    <property type="entry name" value="GluQ/Sye"/>
</dbReference>
<dbReference type="InterPro" id="IPR033910">
    <property type="entry name" value="GluRS_core"/>
</dbReference>
<dbReference type="InterPro" id="IPR014729">
    <property type="entry name" value="Rossmann-like_a/b/a_fold"/>
</dbReference>
<dbReference type="NCBIfam" id="TIGR00464">
    <property type="entry name" value="gltX_bact"/>
    <property type="match status" value="1"/>
</dbReference>
<dbReference type="PANTHER" id="PTHR43311">
    <property type="entry name" value="GLUTAMATE--TRNA LIGASE"/>
    <property type="match status" value="1"/>
</dbReference>
<dbReference type="PANTHER" id="PTHR43311:SF2">
    <property type="entry name" value="GLUTAMATE--TRNA LIGASE, MITOCHONDRIAL-RELATED"/>
    <property type="match status" value="1"/>
</dbReference>
<dbReference type="Pfam" id="PF19269">
    <property type="entry name" value="Anticodon_2"/>
    <property type="match status" value="1"/>
</dbReference>
<dbReference type="Pfam" id="PF00749">
    <property type="entry name" value="tRNA-synt_1c"/>
    <property type="match status" value="1"/>
</dbReference>
<dbReference type="PRINTS" id="PR00987">
    <property type="entry name" value="TRNASYNTHGLU"/>
</dbReference>
<dbReference type="SUPFAM" id="SSF48163">
    <property type="entry name" value="An anticodon-binding domain of class I aminoacyl-tRNA synthetases"/>
    <property type="match status" value="1"/>
</dbReference>
<dbReference type="SUPFAM" id="SSF52374">
    <property type="entry name" value="Nucleotidylyl transferase"/>
    <property type="match status" value="1"/>
</dbReference>
<dbReference type="PROSITE" id="PS00178">
    <property type="entry name" value="AA_TRNA_LIGASE_I"/>
    <property type="match status" value="1"/>
</dbReference>
<evidence type="ECO:0000255" key="1">
    <source>
        <dbReference type="HAMAP-Rule" id="MF_00022"/>
    </source>
</evidence>
<accession>A0M6K0</accession>
<protein>
    <recommendedName>
        <fullName evidence="1">Glutamate--tRNA ligase</fullName>
        <ecNumber evidence="1">6.1.1.17</ecNumber>
    </recommendedName>
    <alternativeName>
        <fullName evidence="1">Glutamyl-tRNA synthetase</fullName>
        <shortName evidence="1">GluRS</shortName>
    </alternativeName>
</protein>
<comment type="function">
    <text evidence="1">Catalyzes the attachment of glutamate to tRNA(Glu) in a two-step reaction: glutamate is first activated by ATP to form Glu-AMP and then transferred to the acceptor end of tRNA(Glu).</text>
</comment>
<comment type="catalytic activity">
    <reaction evidence="1">
        <text>tRNA(Glu) + L-glutamate + ATP = L-glutamyl-tRNA(Glu) + AMP + diphosphate</text>
        <dbReference type="Rhea" id="RHEA:23540"/>
        <dbReference type="Rhea" id="RHEA-COMP:9663"/>
        <dbReference type="Rhea" id="RHEA-COMP:9680"/>
        <dbReference type="ChEBI" id="CHEBI:29985"/>
        <dbReference type="ChEBI" id="CHEBI:30616"/>
        <dbReference type="ChEBI" id="CHEBI:33019"/>
        <dbReference type="ChEBI" id="CHEBI:78442"/>
        <dbReference type="ChEBI" id="CHEBI:78520"/>
        <dbReference type="ChEBI" id="CHEBI:456215"/>
        <dbReference type="EC" id="6.1.1.17"/>
    </reaction>
</comment>
<comment type="subunit">
    <text evidence="1">Monomer.</text>
</comment>
<comment type="subcellular location">
    <subcellularLocation>
        <location evidence="1">Cytoplasm</location>
    </subcellularLocation>
</comment>
<comment type="similarity">
    <text evidence="1">Belongs to the class-I aminoacyl-tRNA synthetase family. Glutamate--tRNA ligase type 1 subfamily.</text>
</comment>
<gene>
    <name evidence="1" type="primary">gltX</name>
    <name type="ordered locus">GFO_3302</name>
</gene>
<reference key="1">
    <citation type="journal article" date="2006" name="Environ. Microbiol.">
        <title>Whole genome analysis of the marine Bacteroidetes'Gramella forsetii' reveals adaptations to degradation of polymeric organic matter.</title>
        <authorList>
            <person name="Bauer M."/>
            <person name="Kube M."/>
            <person name="Teeling H."/>
            <person name="Richter M."/>
            <person name="Lombardot T."/>
            <person name="Allers E."/>
            <person name="Wuerdemann C.A."/>
            <person name="Quast C."/>
            <person name="Kuhl H."/>
            <person name="Knaust F."/>
            <person name="Woebken D."/>
            <person name="Bischof K."/>
            <person name="Mussmann M."/>
            <person name="Choudhuri J.V."/>
            <person name="Meyer F."/>
            <person name="Reinhardt R."/>
            <person name="Amann R.I."/>
            <person name="Gloeckner F.O."/>
        </authorList>
    </citation>
    <scope>NUCLEOTIDE SEQUENCE [LARGE SCALE GENOMIC DNA]</scope>
    <source>
        <strain>DSM 17595 / CGMCC 1.15422 / KT0803</strain>
    </source>
</reference>
<organism>
    <name type="scientific">Christiangramia forsetii (strain DSM 17595 / CGMCC 1.15422 / KT0803)</name>
    <name type="common">Gramella forsetii</name>
    <dbReference type="NCBI Taxonomy" id="411154"/>
    <lineage>
        <taxon>Bacteria</taxon>
        <taxon>Pseudomonadati</taxon>
        <taxon>Bacteroidota</taxon>
        <taxon>Flavobacteriia</taxon>
        <taxon>Flavobacteriales</taxon>
        <taxon>Flavobacteriaceae</taxon>
        <taxon>Christiangramia</taxon>
    </lineage>
</organism>
<proteinExistence type="inferred from homology"/>
<name>SYE_CHRFK</name>